<sequence length="152" mass="16958">MEMTTRTLPSRKRIALVAHDHRKQALLEWVSSNKPQLSEHQLYATGTTGNLIHSATGIPVHCMLSGPMGGDQQVGALIAEGKIDMLVFFWDPLNAVPHDPDVKALLRLATVWNIPVANNRATADFLISSPMFATEMRIAIPDYQRYLNERLI</sequence>
<dbReference type="EC" id="4.2.3.3" evidence="1"/>
<dbReference type="EMBL" id="CP001600">
    <property type="protein sequence ID" value="ACR68588.1"/>
    <property type="molecule type" value="Genomic_DNA"/>
</dbReference>
<dbReference type="RefSeq" id="WP_015870753.1">
    <property type="nucleotide sequence ID" value="NZ_CP169062.1"/>
</dbReference>
<dbReference type="SMR" id="C5BDP0"/>
<dbReference type="STRING" id="67780.B6E78_00345"/>
<dbReference type="KEGG" id="eic:NT01EI_1398"/>
<dbReference type="PATRIC" id="fig|634503.3.peg.1260"/>
<dbReference type="HOGENOM" id="CLU_120420_0_1_6"/>
<dbReference type="OrthoDB" id="9787147at2"/>
<dbReference type="Proteomes" id="UP000001485">
    <property type="component" value="Chromosome"/>
</dbReference>
<dbReference type="GO" id="GO:0005829">
    <property type="term" value="C:cytosol"/>
    <property type="evidence" value="ECO:0007669"/>
    <property type="project" value="TreeGrafter"/>
</dbReference>
<dbReference type="GO" id="GO:0008929">
    <property type="term" value="F:methylglyoxal synthase activity"/>
    <property type="evidence" value="ECO:0007669"/>
    <property type="project" value="UniProtKB-UniRule"/>
</dbReference>
<dbReference type="GO" id="GO:0019242">
    <property type="term" value="P:methylglyoxal biosynthetic process"/>
    <property type="evidence" value="ECO:0007669"/>
    <property type="project" value="UniProtKB-UniRule"/>
</dbReference>
<dbReference type="CDD" id="cd01422">
    <property type="entry name" value="MGS"/>
    <property type="match status" value="1"/>
</dbReference>
<dbReference type="FunFam" id="3.40.50.1380:FF:000002">
    <property type="entry name" value="Methylglyoxal synthase"/>
    <property type="match status" value="1"/>
</dbReference>
<dbReference type="Gene3D" id="3.40.50.1380">
    <property type="entry name" value="Methylglyoxal synthase-like domain"/>
    <property type="match status" value="1"/>
</dbReference>
<dbReference type="HAMAP" id="MF_00549">
    <property type="entry name" value="Methylglyoxal_synth"/>
    <property type="match status" value="1"/>
</dbReference>
<dbReference type="InterPro" id="IPR004363">
    <property type="entry name" value="Methylgl_synth"/>
</dbReference>
<dbReference type="InterPro" id="IPR018148">
    <property type="entry name" value="Methylglyoxal_synth_AS"/>
</dbReference>
<dbReference type="InterPro" id="IPR011607">
    <property type="entry name" value="MGS-like_dom"/>
</dbReference>
<dbReference type="InterPro" id="IPR036914">
    <property type="entry name" value="MGS-like_dom_sf"/>
</dbReference>
<dbReference type="NCBIfam" id="TIGR00160">
    <property type="entry name" value="MGSA"/>
    <property type="match status" value="1"/>
</dbReference>
<dbReference type="NCBIfam" id="NF003559">
    <property type="entry name" value="PRK05234.1"/>
    <property type="match status" value="1"/>
</dbReference>
<dbReference type="PANTHER" id="PTHR30492">
    <property type="entry name" value="METHYLGLYOXAL SYNTHASE"/>
    <property type="match status" value="1"/>
</dbReference>
<dbReference type="PANTHER" id="PTHR30492:SF0">
    <property type="entry name" value="METHYLGLYOXAL SYNTHASE"/>
    <property type="match status" value="1"/>
</dbReference>
<dbReference type="Pfam" id="PF02142">
    <property type="entry name" value="MGS"/>
    <property type="match status" value="1"/>
</dbReference>
<dbReference type="PIRSF" id="PIRSF006614">
    <property type="entry name" value="Methylglyox_syn"/>
    <property type="match status" value="1"/>
</dbReference>
<dbReference type="SMART" id="SM00851">
    <property type="entry name" value="MGS"/>
    <property type="match status" value="1"/>
</dbReference>
<dbReference type="SUPFAM" id="SSF52335">
    <property type="entry name" value="Methylglyoxal synthase-like"/>
    <property type="match status" value="1"/>
</dbReference>
<dbReference type="PROSITE" id="PS01335">
    <property type="entry name" value="METHYLGLYOXAL_SYNTH"/>
    <property type="match status" value="1"/>
</dbReference>
<dbReference type="PROSITE" id="PS51855">
    <property type="entry name" value="MGS"/>
    <property type="match status" value="1"/>
</dbReference>
<proteinExistence type="inferred from homology"/>
<gene>
    <name evidence="1" type="primary">mgsA</name>
    <name type="ordered locus">NT01EI_1398</name>
</gene>
<organism>
    <name type="scientific">Edwardsiella ictaluri (strain 93-146)</name>
    <dbReference type="NCBI Taxonomy" id="634503"/>
    <lineage>
        <taxon>Bacteria</taxon>
        <taxon>Pseudomonadati</taxon>
        <taxon>Pseudomonadota</taxon>
        <taxon>Gammaproteobacteria</taxon>
        <taxon>Enterobacterales</taxon>
        <taxon>Hafniaceae</taxon>
        <taxon>Edwardsiella</taxon>
    </lineage>
</organism>
<reference key="1">
    <citation type="submission" date="2009-03" db="EMBL/GenBank/DDBJ databases">
        <title>Complete genome sequence of Edwardsiella ictaluri 93-146.</title>
        <authorList>
            <person name="Williams M.L."/>
            <person name="Gillaspy A.F."/>
            <person name="Dyer D.W."/>
            <person name="Thune R.L."/>
            <person name="Waldbieser G.C."/>
            <person name="Schuster S.C."/>
            <person name="Gipson J."/>
            <person name="Zaitshik J."/>
            <person name="Landry C."/>
            <person name="Lawrence M.L."/>
        </authorList>
    </citation>
    <scope>NUCLEOTIDE SEQUENCE [LARGE SCALE GENOMIC DNA]</scope>
    <source>
        <strain>93-146</strain>
    </source>
</reference>
<protein>
    <recommendedName>
        <fullName evidence="1">Methylglyoxal synthase</fullName>
        <shortName evidence="1">MGS</shortName>
        <ecNumber evidence="1">4.2.3.3</ecNumber>
    </recommendedName>
</protein>
<feature type="chain" id="PRO_1000211982" description="Methylglyoxal synthase">
    <location>
        <begin position="1"/>
        <end position="152"/>
    </location>
</feature>
<feature type="domain" description="MGS-like" evidence="1">
    <location>
        <begin position="6"/>
        <end position="152"/>
    </location>
</feature>
<feature type="active site" description="Proton donor/acceptor" evidence="1">
    <location>
        <position position="71"/>
    </location>
</feature>
<feature type="binding site" evidence="1">
    <location>
        <position position="19"/>
    </location>
    <ligand>
        <name>substrate</name>
    </ligand>
</feature>
<feature type="binding site" evidence="1">
    <location>
        <position position="23"/>
    </location>
    <ligand>
        <name>substrate</name>
    </ligand>
</feature>
<feature type="binding site" evidence="1">
    <location>
        <begin position="45"/>
        <end position="48"/>
    </location>
    <ligand>
        <name>substrate</name>
    </ligand>
</feature>
<feature type="binding site" evidence="1">
    <location>
        <begin position="65"/>
        <end position="66"/>
    </location>
    <ligand>
        <name>substrate</name>
    </ligand>
</feature>
<feature type="binding site" evidence="1">
    <location>
        <position position="98"/>
    </location>
    <ligand>
        <name>substrate</name>
    </ligand>
</feature>
<comment type="function">
    <text evidence="1">Catalyzes the formation of methylglyoxal from dihydroxyacetone phosphate.</text>
</comment>
<comment type="catalytic activity">
    <reaction evidence="1">
        <text>dihydroxyacetone phosphate = methylglyoxal + phosphate</text>
        <dbReference type="Rhea" id="RHEA:17937"/>
        <dbReference type="ChEBI" id="CHEBI:17158"/>
        <dbReference type="ChEBI" id="CHEBI:43474"/>
        <dbReference type="ChEBI" id="CHEBI:57642"/>
        <dbReference type="EC" id="4.2.3.3"/>
    </reaction>
</comment>
<comment type="similarity">
    <text evidence="1">Belongs to the methylglyoxal synthase family.</text>
</comment>
<name>MGSA_EDWI9</name>
<keyword id="KW-0456">Lyase</keyword>
<accession>C5BDP0</accession>
<evidence type="ECO:0000255" key="1">
    <source>
        <dbReference type="HAMAP-Rule" id="MF_00549"/>
    </source>
</evidence>